<sequence>MLKPLSQLVCALPLVVAASSYADDSAALKDKLAKLDNLKANFSQQVTDVNNKVIQQGTGTFALAVPNQFYWHLTQPDESLIVADGRDVWIYNPFAEEVSVLDFNQAINASPIALLVHRDDATWQAYQVKRQDDCYQITPKAVDASVTGVEVCFKDEQLEVMKLTDQQGNLSVFNLSAQAPLKDADASLFQFTVPEGVDIDDQRLKALD</sequence>
<accession>A3QEJ1</accession>
<reference key="1">
    <citation type="submission" date="2007-03" db="EMBL/GenBank/DDBJ databases">
        <title>Complete sequence of Shewanella loihica PV-4.</title>
        <authorList>
            <consortium name="US DOE Joint Genome Institute"/>
            <person name="Copeland A."/>
            <person name="Lucas S."/>
            <person name="Lapidus A."/>
            <person name="Barry K."/>
            <person name="Detter J.C."/>
            <person name="Glavina del Rio T."/>
            <person name="Hammon N."/>
            <person name="Israni S."/>
            <person name="Dalin E."/>
            <person name="Tice H."/>
            <person name="Pitluck S."/>
            <person name="Chain P."/>
            <person name="Malfatti S."/>
            <person name="Shin M."/>
            <person name="Vergez L."/>
            <person name="Schmutz J."/>
            <person name="Larimer F."/>
            <person name="Land M."/>
            <person name="Hauser L."/>
            <person name="Kyrpides N."/>
            <person name="Mikhailova N."/>
            <person name="Romine M.F."/>
            <person name="Serres G."/>
            <person name="Fredrickson J."/>
            <person name="Tiedje J."/>
            <person name="Richardson P."/>
        </authorList>
    </citation>
    <scope>NUCLEOTIDE SEQUENCE [LARGE SCALE GENOMIC DNA]</scope>
    <source>
        <strain>ATCC BAA-1088 / PV-4</strain>
    </source>
</reference>
<proteinExistence type="inferred from homology"/>
<keyword id="KW-0143">Chaperone</keyword>
<keyword id="KW-0574">Periplasm</keyword>
<keyword id="KW-0653">Protein transport</keyword>
<keyword id="KW-1185">Reference proteome</keyword>
<keyword id="KW-0732">Signal</keyword>
<keyword id="KW-0813">Transport</keyword>
<evidence type="ECO:0000255" key="1">
    <source>
        <dbReference type="HAMAP-Rule" id="MF_00240"/>
    </source>
</evidence>
<dbReference type="EMBL" id="CP000606">
    <property type="protein sequence ID" value="ABO23889.1"/>
    <property type="molecule type" value="Genomic_DNA"/>
</dbReference>
<dbReference type="RefSeq" id="WP_011865821.1">
    <property type="nucleotide sequence ID" value="NC_009092.1"/>
</dbReference>
<dbReference type="SMR" id="A3QEJ1"/>
<dbReference type="STRING" id="323850.Shew_2023"/>
<dbReference type="KEGG" id="slo:Shew_2023"/>
<dbReference type="eggNOG" id="COG2834">
    <property type="taxonomic scope" value="Bacteria"/>
</dbReference>
<dbReference type="HOGENOM" id="CLU_087560_1_0_6"/>
<dbReference type="OrthoDB" id="9787361at2"/>
<dbReference type="Proteomes" id="UP000001558">
    <property type="component" value="Chromosome"/>
</dbReference>
<dbReference type="GO" id="GO:0030288">
    <property type="term" value="C:outer membrane-bounded periplasmic space"/>
    <property type="evidence" value="ECO:0007669"/>
    <property type="project" value="TreeGrafter"/>
</dbReference>
<dbReference type="GO" id="GO:0044874">
    <property type="term" value="P:lipoprotein localization to outer membrane"/>
    <property type="evidence" value="ECO:0007669"/>
    <property type="project" value="UniProtKB-UniRule"/>
</dbReference>
<dbReference type="GO" id="GO:0042953">
    <property type="term" value="P:lipoprotein transport"/>
    <property type="evidence" value="ECO:0007669"/>
    <property type="project" value="InterPro"/>
</dbReference>
<dbReference type="CDD" id="cd16325">
    <property type="entry name" value="LolA"/>
    <property type="match status" value="1"/>
</dbReference>
<dbReference type="Gene3D" id="2.50.20.10">
    <property type="entry name" value="Lipoprotein localisation LolA/LolB/LppX"/>
    <property type="match status" value="1"/>
</dbReference>
<dbReference type="HAMAP" id="MF_00240">
    <property type="entry name" value="LolA"/>
    <property type="match status" value="1"/>
</dbReference>
<dbReference type="InterPro" id="IPR029046">
    <property type="entry name" value="LolA/LolB/LppX"/>
</dbReference>
<dbReference type="InterPro" id="IPR004564">
    <property type="entry name" value="OM_lipoprot_carrier_LolA-like"/>
</dbReference>
<dbReference type="InterPro" id="IPR018323">
    <property type="entry name" value="OM_lipoprot_carrier_LolA_Pbac"/>
</dbReference>
<dbReference type="NCBIfam" id="TIGR00547">
    <property type="entry name" value="lolA"/>
    <property type="match status" value="1"/>
</dbReference>
<dbReference type="PANTHER" id="PTHR35869">
    <property type="entry name" value="OUTER-MEMBRANE LIPOPROTEIN CARRIER PROTEIN"/>
    <property type="match status" value="1"/>
</dbReference>
<dbReference type="PANTHER" id="PTHR35869:SF1">
    <property type="entry name" value="OUTER-MEMBRANE LIPOPROTEIN CARRIER PROTEIN"/>
    <property type="match status" value="1"/>
</dbReference>
<dbReference type="Pfam" id="PF03548">
    <property type="entry name" value="LolA"/>
    <property type="match status" value="1"/>
</dbReference>
<dbReference type="SUPFAM" id="SSF89392">
    <property type="entry name" value="Prokaryotic lipoproteins and lipoprotein localization factors"/>
    <property type="match status" value="1"/>
</dbReference>
<gene>
    <name evidence="1" type="primary">lolA</name>
    <name type="ordered locus">Shew_2023</name>
</gene>
<name>LOLA_SHELP</name>
<protein>
    <recommendedName>
        <fullName evidence="1">Outer-membrane lipoprotein carrier protein</fullName>
    </recommendedName>
</protein>
<organism>
    <name type="scientific">Shewanella loihica (strain ATCC BAA-1088 / PV-4)</name>
    <dbReference type="NCBI Taxonomy" id="323850"/>
    <lineage>
        <taxon>Bacteria</taxon>
        <taxon>Pseudomonadati</taxon>
        <taxon>Pseudomonadota</taxon>
        <taxon>Gammaproteobacteria</taxon>
        <taxon>Alteromonadales</taxon>
        <taxon>Shewanellaceae</taxon>
        <taxon>Shewanella</taxon>
    </lineage>
</organism>
<comment type="function">
    <text evidence="1">Participates in the translocation of lipoproteins from the inner membrane to the outer membrane. Only forms a complex with a lipoprotein if the residue after the N-terminal Cys is not an aspartate (The Asp acts as a targeting signal to indicate that the lipoprotein should stay in the inner membrane).</text>
</comment>
<comment type="subunit">
    <text evidence="1">Monomer.</text>
</comment>
<comment type="subcellular location">
    <subcellularLocation>
        <location evidence="1">Periplasm</location>
    </subcellularLocation>
</comment>
<comment type="similarity">
    <text evidence="1">Belongs to the LolA family.</text>
</comment>
<feature type="signal peptide" evidence="1">
    <location>
        <begin position="1"/>
        <end position="22"/>
    </location>
</feature>
<feature type="chain" id="PRO_5000229222" description="Outer-membrane lipoprotein carrier protein">
    <location>
        <begin position="23"/>
        <end position="208"/>
    </location>
</feature>